<organism>
    <name type="scientific">Mus musculus</name>
    <name type="common">Mouse</name>
    <dbReference type="NCBI Taxonomy" id="10090"/>
    <lineage>
        <taxon>Eukaryota</taxon>
        <taxon>Metazoa</taxon>
        <taxon>Chordata</taxon>
        <taxon>Craniata</taxon>
        <taxon>Vertebrata</taxon>
        <taxon>Euteleostomi</taxon>
        <taxon>Mammalia</taxon>
        <taxon>Eutheria</taxon>
        <taxon>Euarchontoglires</taxon>
        <taxon>Glires</taxon>
        <taxon>Rodentia</taxon>
        <taxon>Myomorpha</taxon>
        <taxon>Muroidea</taxon>
        <taxon>Muridae</taxon>
        <taxon>Murinae</taxon>
        <taxon>Mus</taxon>
        <taxon>Mus</taxon>
    </lineage>
</organism>
<keyword id="KW-0217">Developmental protein</keyword>
<keyword id="KW-0238">DNA-binding</keyword>
<keyword id="KW-0539">Nucleus</keyword>
<keyword id="KW-1185">Reference proteome</keyword>
<keyword id="KW-0804">Transcription</keyword>
<keyword id="KW-0805">Transcription regulation</keyword>
<gene>
    <name type="primary">Vrtn</name>
</gene>
<evidence type="ECO:0000250" key="1">
    <source>
        <dbReference type="UniProtKB" id="E1CHH8"/>
    </source>
</evidence>
<evidence type="ECO:0000256" key="2">
    <source>
        <dbReference type="SAM" id="MobiDB-lite"/>
    </source>
</evidence>
<evidence type="ECO:0000269" key="3">
    <source>
    </source>
</evidence>
<evidence type="ECO:0000305" key="4"/>
<accession>Q3SYK4</accession>
<sequence length="740" mass="83135">MTSRDQLVQQVLRDLQEAVESEGLEGLIGAALEAKQVLSSFTLPICQKGGPGAQVLEVDSVALSLYPEDAPRNMLPLVCKGEGSLLFEATSLLLWGHTGLSLELRARTVVEMLLHRHYYLQGMIDSKVMLQAVRYSLCSEESPEMTNLSFATLEAIFDADVKATCFPTSFSNVWHLYALASILECNIYSIYPMRNIKIRPYFNRVIMPRCSTHVTSMLHIMWAGQPLTSHLFRHQYFAPVVGLEEVEADCTASLNPVPPNLGPLLPPAKTLELLNREPGLSYSHLCDRISITKSTFYRWRRQTQEHRQKVATRFSAKHFLQDSFHRGGFVPLQQFLQRFPEISRSTYYAWKHELLGSGANSALGPATPSREALAVPEVERPPGKKAAEEVGCSSLAAAMLSPPSMILMQRAKSFLEYCISLNKLVPYRCFKCRFPGISRSTYYNWRRKALRRTPSFKLSQAAFETAESLQPTDVGKETPFSLKREAGEEETGKAGSGAPLTSRGLISPKMPLSRWQRRLRRAARKQVLNGHLPFCRFRLRYPSLLPSTFWVWKSLSRRSPGMQIPSLSQRRQKPQGRQKPEGRQKPEEQQKPEGRQKPEGRQKPVEPQAMEADQNVPAMVVPPAETLPVATSPEDVPGGPSREGNIIQEAAMTQSQPHSGSLPSQTLAEAPGGSDGQVLVMDMLTTTRFKAQAKLFLQKRFQSKTFPSYKEFQALFPLTARSTYYMWKRALYEGLTLIDG</sequence>
<comment type="function">
    <text evidence="3">Acts as a transcription factor that regulates development of thoracic vertebrae.</text>
</comment>
<comment type="subcellular location">
    <subcellularLocation>
        <location evidence="1">Nucleus</location>
    </subcellularLocation>
</comment>
<comment type="developmental stage">
    <text evidence="3">Highly expressed from 7.5 dpc to 9.5 dpc.</text>
</comment>
<comment type="disruption phenotype">
    <text evidence="3">Deficient homozygous mice exhibit delayed embryonic development, impaired somite formation, failure to initate turning and lethality between 10.5 dpc and 11.5 dpc. Mice heterozygous for the allele exhibit kyphosis, decreased thoracic vertebrae numbers and missing rib.</text>
</comment>
<comment type="similarity">
    <text evidence="4">Belongs to the vertnin family.</text>
</comment>
<proteinExistence type="evidence at transcript level"/>
<name>VRTN_MOUSE</name>
<reference key="1">
    <citation type="submission" date="2005-07" db="EMBL/GenBank/DDBJ databases">
        <authorList>
            <person name="Mural R.J."/>
            <person name="Adams M.D."/>
            <person name="Myers E.W."/>
            <person name="Smith H.O."/>
            <person name="Venter J.C."/>
        </authorList>
    </citation>
    <scope>NUCLEOTIDE SEQUENCE [LARGE SCALE GENOMIC DNA]</scope>
</reference>
<reference key="2">
    <citation type="journal article" date="2004" name="Genome Res.">
        <title>The status, quality, and expansion of the NIH full-length cDNA project: the Mammalian Gene Collection (MGC).</title>
        <authorList>
            <consortium name="The MGC Project Team"/>
        </authorList>
    </citation>
    <scope>NUCLEOTIDE SEQUENCE [LARGE SCALE MRNA]</scope>
    <source>
        <tissue>Oocyte</tissue>
    </source>
</reference>
<reference key="3">
    <citation type="journal article" date="2018" name="Int. J. Biol. Sci.">
        <title>VRTN is Required for the Development of Thoracic Vertebrae in Mammals.</title>
        <authorList>
            <person name="Duan Y."/>
            <person name="Zhang H."/>
            <person name="Zhang Z."/>
            <person name="Gao J."/>
            <person name="Yang J."/>
            <person name="Wu Z."/>
            <person name="Fan Y."/>
            <person name="Xing Y."/>
            <person name="Li L."/>
            <person name="Xiao S."/>
            <person name="Hou Y."/>
            <person name="Ren J."/>
            <person name="Huang L."/>
        </authorList>
    </citation>
    <scope>DISRUPTION PHENOTYPE</scope>
    <scope>FUNCTION</scope>
    <scope>DEVELOPMENTAL STAGE</scope>
</reference>
<protein>
    <recommendedName>
        <fullName>Vertnin</fullName>
    </recommendedName>
</protein>
<feature type="chain" id="PRO_0000404600" description="Vertnin">
    <location>
        <begin position="1"/>
        <end position="740"/>
    </location>
</feature>
<feature type="region of interest" description="Disordered" evidence="2">
    <location>
        <begin position="485"/>
        <end position="506"/>
    </location>
</feature>
<feature type="region of interest" description="Disordered" evidence="2">
    <location>
        <begin position="560"/>
        <end position="616"/>
    </location>
</feature>
<feature type="region of interest" description="Disordered" evidence="2">
    <location>
        <begin position="653"/>
        <end position="673"/>
    </location>
</feature>
<feature type="compositionally biased region" description="Basic and acidic residues" evidence="2">
    <location>
        <begin position="578"/>
        <end position="604"/>
    </location>
</feature>
<feature type="compositionally biased region" description="Polar residues" evidence="2">
    <location>
        <begin position="653"/>
        <end position="667"/>
    </location>
</feature>
<dbReference type="EMBL" id="CH466590">
    <property type="protein sequence ID" value="EDL02817.1"/>
    <property type="molecule type" value="Genomic_DNA"/>
</dbReference>
<dbReference type="EMBL" id="BC103771">
    <property type="protein sequence ID" value="AAI03772.1"/>
    <property type="molecule type" value="mRNA"/>
</dbReference>
<dbReference type="CCDS" id="CCDS26048.1"/>
<dbReference type="RefSeq" id="NP_001028948.1">
    <property type="nucleotide sequence ID" value="NM_001033776.2"/>
</dbReference>
<dbReference type="RefSeq" id="NP_001162060.1">
    <property type="nucleotide sequence ID" value="NM_001168588.1"/>
</dbReference>
<dbReference type="RefSeq" id="NP_001162061.1">
    <property type="nucleotide sequence ID" value="NM_001168589.2"/>
</dbReference>
<dbReference type="BioGRID" id="240749">
    <property type="interactions" value="2"/>
</dbReference>
<dbReference type="FunCoup" id="Q3SYK4">
    <property type="interactions" value="42"/>
</dbReference>
<dbReference type="IntAct" id="Q3SYK4">
    <property type="interactions" value="1"/>
</dbReference>
<dbReference type="STRING" id="10090.ENSMUSP00000132050"/>
<dbReference type="GlyGen" id="Q3SYK4">
    <property type="glycosylation" value="3 sites, 1 O-linked glycan (3 sites)"/>
</dbReference>
<dbReference type="PhosphoSitePlus" id="Q3SYK4"/>
<dbReference type="PaxDb" id="10090-ENSMUSP00000132050"/>
<dbReference type="PeptideAtlas" id="Q3SYK4"/>
<dbReference type="Antibodypedia" id="7">
    <property type="antibodies" value="42 antibodies from 14 providers"/>
</dbReference>
<dbReference type="Ensembl" id="ENSMUST00000095551.5">
    <property type="protein sequence ID" value="ENSMUSP00000093207.5"/>
    <property type="gene ID" value="ENSMUSG00000071235.13"/>
</dbReference>
<dbReference type="Ensembl" id="ENSMUST00000166772.9">
    <property type="protein sequence ID" value="ENSMUSP00000128808.3"/>
    <property type="gene ID" value="ENSMUSG00000071235.13"/>
</dbReference>
<dbReference type="Ensembl" id="ENSMUST00000167227.8">
    <property type="protein sequence ID" value="ENSMUSP00000132050.2"/>
    <property type="gene ID" value="ENSMUSG00000071235.13"/>
</dbReference>
<dbReference type="GeneID" id="432677"/>
<dbReference type="KEGG" id="mmu:432677"/>
<dbReference type="UCSC" id="uc007ofq.1">
    <property type="organism name" value="mouse"/>
</dbReference>
<dbReference type="AGR" id="MGI:3588197"/>
<dbReference type="CTD" id="55237"/>
<dbReference type="MGI" id="MGI:3588197">
    <property type="gene designation" value="Vrtn"/>
</dbReference>
<dbReference type="VEuPathDB" id="HostDB:ENSMUSG00000071235"/>
<dbReference type="eggNOG" id="ENOG502SC23">
    <property type="taxonomic scope" value="Eukaryota"/>
</dbReference>
<dbReference type="GeneTree" id="ENSGT00390000007874"/>
<dbReference type="HOGENOM" id="CLU_429970_0_0_1"/>
<dbReference type="InParanoid" id="Q3SYK4"/>
<dbReference type="OMA" id="RRCDHVP"/>
<dbReference type="OrthoDB" id="9869831at2759"/>
<dbReference type="PhylomeDB" id="Q3SYK4"/>
<dbReference type="TreeFam" id="TF332015"/>
<dbReference type="BioGRID-ORCS" id="432677">
    <property type="hits" value="6 hits in 78 CRISPR screens"/>
</dbReference>
<dbReference type="ChiTaRS" id="Vrtn">
    <property type="organism name" value="mouse"/>
</dbReference>
<dbReference type="PRO" id="PR:Q3SYK4"/>
<dbReference type="Proteomes" id="UP000000589">
    <property type="component" value="Chromosome 12"/>
</dbReference>
<dbReference type="RNAct" id="Q3SYK4">
    <property type="molecule type" value="protein"/>
</dbReference>
<dbReference type="Bgee" id="ENSMUSG00000071235">
    <property type="expression patterns" value="Expressed in animal zygote and 14 other cell types or tissues"/>
</dbReference>
<dbReference type="ExpressionAtlas" id="Q3SYK4">
    <property type="expression patterns" value="baseline and differential"/>
</dbReference>
<dbReference type="GO" id="GO:0005634">
    <property type="term" value="C:nucleus"/>
    <property type="evidence" value="ECO:0000250"/>
    <property type="project" value="UniProtKB"/>
</dbReference>
<dbReference type="GO" id="GO:0003677">
    <property type="term" value="F:DNA binding"/>
    <property type="evidence" value="ECO:0007669"/>
    <property type="project" value="UniProtKB-KW"/>
</dbReference>
<dbReference type="GO" id="GO:0006357">
    <property type="term" value="P:regulation of transcription by RNA polymerase II"/>
    <property type="evidence" value="ECO:0000250"/>
    <property type="project" value="UniProtKB"/>
</dbReference>
<dbReference type="CDD" id="cd22791">
    <property type="entry name" value="OTU_VRTN"/>
    <property type="match status" value="1"/>
</dbReference>
<dbReference type="InterPro" id="IPR038822">
    <property type="entry name" value="Vertnin-like"/>
</dbReference>
<dbReference type="InterPro" id="IPR047273">
    <property type="entry name" value="VRTN_OTU_dom"/>
</dbReference>
<dbReference type="PANTHER" id="PTHR16081">
    <property type="entry name" value="VERTNIN"/>
    <property type="match status" value="1"/>
</dbReference>
<dbReference type="PANTHER" id="PTHR16081:SF0">
    <property type="entry name" value="VERTNIN"/>
    <property type="match status" value="1"/>
</dbReference>